<evidence type="ECO:0000255" key="1"/>
<evidence type="ECO:0000305" key="2"/>
<accession>Q9ZD71</accession>
<feature type="chain" id="PRO_0000101379" description="Uncharacterized protein RP473">
    <location>
        <begin position="1"/>
        <end position="231"/>
    </location>
</feature>
<feature type="transmembrane region" description="Helical" evidence="1">
    <location>
        <begin position="10"/>
        <end position="30"/>
    </location>
</feature>
<comment type="subcellular location">
    <subcellularLocation>
        <location evidence="2">Membrane</location>
        <topology evidence="2">Single-pass membrane protein</topology>
    </subcellularLocation>
</comment>
<keyword id="KW-0472">Membrane</keyword>
<keyword id="KW-1185">Reference proteome</keyword>
<keyword id="KW-0812">Transmembrane</keyword>
<keyword id="KW-1133">Transmembrane helix</keyword>
<reference key="1">
    <citation type="journal article" date="1998" name="Nature">
        <title>The genome sequence of Rickettsia prowazekii and the origin of mitochondria.</title>
        <authorList>
            <person name="Andersson S.G.E."/>
            <person name="Zomorodipour A."/>
            <person name="Andersson J.O."/>
            <person name="Sicheritz-Ponten T."/>
            <person name="Alsmark U.C.M."/>
            <person name="Podowski R.M."/>
            <person name="Naeslund A.K."/>
            <person name="Eriksson A.-S."/>
            <person name="Winkler H.H."/>
            <person name="Kurland C.G."/>
        </authorList>
    </citation>
    <scope>NUCLEOTIDE SEQUENCE [LARGE SCALE GENOMIC DNA]</scope>
    <source>
        <strain>Madrid E</strain>
    </source>
</reference>
<sequence>MQKFDSLFRSQNIFFIAIVIFILSSVILYHNRSDILKLFTTEYKGLNQITNQEKENKENAILDEKEYETLLSTKSLLNYVNSLKSSKTSIPDSEAIIHESVEVTDNIVEVPIRYTHYLLNVNLLVYNFIQDKDYSKELRILKSYPLPQNIRNILNNLEKYNNNYLVSKSNSTVVIFPIHHKWLEQLIKIEKKSPVMIVKEQDKTLILEKLNYLIYFLYSEKFMQEFVNKDV</sequence>
<organism>
    <name type="scientific">Rickettsia prowazekii (strain Madrid E)</name>
    <dbReference type="NCBI Taxonomy" id="272947"/>
    <lineage>
        <taxon>Bacteria</taxon>
        <taxon>Pseudomonadati</taxon>
        <taxon>Pseudomonadota</taxon>
        <taxon>Alphaproteobacteria</taxon>
        <taxon>Rickettsiales</taxon>
        <taxon>Rickettsiaceae</taxon>
        <taxon>Rickettsieae</taxon>
        <taxon>Rickettsia</taxon>
        <taxon>typhus group</taxon>
    </lineage>
</organism>
<protein>
    <recommendedName>
        <fullName>Uncharacterized protein RP473</fullName>
    </recommendedName>
</protein>
<dbReference type="EMBL" id="AJ235271">
    <property type="protein sequence ID" value="CAA14928.1"/>
    <property type="molecule type" value="Genomic_DNA"/>
</dbReference>
<dbReference type="PIR" id="F71706">
    <property type="entry name" value="F71706"/>
</dbReference>
<dbReference type="RefSeq" id="NP_220852.1">
    <property type="nucleotide sequence ID" value="NC_000963.1"/>
</dbReference>
<dbReference type="RefSeq" id="WP_004599496.1">
    <property type="nucleotide sequence ID" value="NC_000963.1"/>
</dbReference>
<dbReference type="SMR" id="Q9ZD71"/>
<dbReference type="STRING" id="272947.gene:17555553"/>
<dbReference type="EnsemblBacteria" id="CAA14928">
    <property type="protein sequence ID" value="CAA14928"/>
    <property type="gene ID" value="CAA14928"/>
</dbReference>
<dbReference type="KEGG" id="rpr:RP473"/>
<dbReference type="PATRIC" id="fig|272947.5.peg.484"/>
<dbReference type="eggNOG" id="COG0852">
    <property type="taxonomic scope" value="Bacteria"/>
</dbReference>
<dbReference type="HOGENOM" id="CLU_1110722_0_0_5"/>
<dbReference type="OrthoDB" id="7160957at2"/>
<dbReference type="Proteomes" id="UP000002480">
    <property type="component" value="Chromosome"/>
</dbReference>
<dbReference type="GO" id="GO:0016020">
    <property type="term" value="C:membrane"/>
    <property type="evidence" value="ECO:0007669"/>
    <property type="project" value="UniProtKB-SubCell"/>
</dbReference>
<proteinExistence type="predicted"/>
<gene>
    <name type="ordered locus">RP473</name>
</gene>
<name>Y473_RICPR</name>